<proteinExistence type="inferred from homology"/>
<gene>
    <name evidence="2" type="primary">Spc25</name>
    <name type="ORF">GF16921</name>
</gene>
<comment type="function">
    <text evidence="1 2">Acts as a component of the essential kinetochore-associated Ndc80 complex, which is required for chromosome segregation and spindle checkpoint activity during meiosis and mitosis. Required for kinetochore integrity and the organization of stable microtubule binding sites in the outer plate of the kinetochore. Participates in SAC signaling that responds specifically to disruptions in spindle microtubule dynamics. The NDC80 complex synergistically enhances the affinity of the SKA1 complex for microtubules and may allow the NDC80 complex to track depolymerizing microtubules.</text>
</comment>
<comment type="subunit">
    <text evidence="2">Component of the Ndc80 complex, which is composed of Ndc80, Nuf2 and Spc25.</text>
</comment>
<comment type="subcellular location">
    <subcellularLocation>
        <location evidence="2">Nucleus</location>
    </subcellularLocation>
    <subcellularLocation>
        <location evidence="2">Chromosome</location>
        <location evidence="2">Centromere</location>
        <location evidence="2">Kinetochore</location>
    </subcellularLocation>
</comment>
<comment type="similarity">
    <text evidence="3">Belongs to the SPC25 family.</text>
</comment>
<accession>B3LW62</accession>
<reference evidence="4" key="1">
    <citation type="journal article" date="2007" name="Nature">
        <title>Evolution of genes and genomes on the Drosophila phylogeny.</title>
        <authorList>
            <consortium name="Drosophila 12 genomes consortium"/>
        </authorList>
    </citation>
    <scope>NUCLEOTIDE SEQUENCE [LARGE SCALE GENOMIC DNA]</scope>
    <source>
        <strain evidence="4">Tucson 14024-0371.13</strain>
    </source>
</reference>
<organism>
    <name type="scientific">Drosophila ananassae</name>
    <name type="common">Fruit fly</name>
    <dbReference type="NCBI Taxonomy" id="7217"/>
    <lineage>
        <taxon>Eukaryota</taxon>
        <taxon>Metazoa</taxon>
        <taxon>Ecdysozoa</taxon>
        <taxon>Arthropoda</taxon>
        <taxon>Hexapoda</taxon>
        <taxon>Insecta</taxon>
        <taxon>Pterygota</taxon>
        <taxon>Neoptera</taxon>
        <taxon>Endopterygota</taxon>
        <taxon>Diptera</taxon>
        <taxon>Brachycera</taxon>
        <taxon>Muscomorpha</taxon>
        <taxon>Ephydroidea</taxon>
        <taxon>Drosophilidae</taxon>
        <taxon>Drosophila</taxon>
        <taxon>Sophophora</taxon>
    </lineage>
</organism>
<dbReference type="EMBL" id="CH902617">
    <property type="protein sequence ID" value="EDV42640.1"/>
    <property type="molecule type" value="Genomic_DNA"/>
</dbReference>
<dbReference type="SMR" id="B3LW62"/>
<dbReference type="FunCoup" id="B3LW62">
    <property type="interactions" value="56"/>
</dbReference>
<dbReference type="STRING" id="7217.B3LW62"/>
<dbReference type="EnsemblMetazoa" id="FBtr0121621">
    <property type="protein sequence ID" value="FBpp0120113"/>
    <property type="gene ID" value="FBgn0093941"/>
</dbReference>
<dbReference type="EnsemblMetazoa" id="XM_001954043.4">
    <property type="protein sequence ID" value="XP_001954079.1"/>
    <property type="gene ID" value="LOC6499713"/>
</dbReference>
<dbReference type="GeneID" id="6499713"/>
<dbReference type="KEGG" id="dan:6499713"/>
<dbReference type="eggNOG" id="ENOG502RVT8">
    <property type="taxonomic scope" value="Eukaryota"/>
</dbReference>
<dbReference type="HOGENOM" id="CLU_1246541_0_0_1"/>
<dbReference type="InParanoid" id="B3LW62"/>
<dbReference type="OMA" id="NELMECM"/>
<dbReference type="OrthoDB" id="8006210at2759"/>
<dbReference type="PhylomeDB" id="B3LW62"/>
<dbReference type="Proteomes" id="UP000007801">
    <property type="component" value="Unassembled WGS sequence"/>
</dbReference>
<dbReference type="GO" id="GO:0031262">
    <property type="term" value="C:Ndc80 complex"/>
    <property type="evidence" value="ECO:0000250"/>
    <property type="project" value="UniProtKB"/>
</dbReference>
<dbReference type="GO" id="GO:0005634">
    <property type="term" value="C:nucleus"/>
    <property type="evidence" value="ECO:0007669"/>
    <property type="project" value="UniProtKB-SubCell"/>
</dbReference>
<dbReference type="GO" id="GO:0051301">
    <property type="term" value="P:cell division"/>
    <property type="evidence" value="ECO:0007669"/>
    <property type="project" value="UniProtKB-KW"/>
</dbReference>
<dbReference type="GO" id="GO:0051311">
    <property type="term" value="P:meiotic metaphase chromosome alignment"/>
    <property type="evidence" value="ECO:0000250"/>
    <property type="project" value="UniProtKB"/>
</dbReference>
<dbReference type="GO" id="GO:0000212">
    <property type="term" value="P:meiotic spindle organization"/>
    <property type="evidence" value="ECO:0000250"/>
    <property type="project" value="UniProtKB"/>
</dbReference>
<dbReference type="GO" id="GO:0007080">
    <property type="term" value="P:mitotic metaphase chromosome alignment"/>
    <property type="evidence" value="ECO:0000250"/>
    <property type="project" value="UniProtKB"/>
</dbReference>
<feature type="chain" id="PRO_0000392414" description="Kinetochore protein Spc25">
    <location>
        <begin position="1"/>
        <end position="215"/>
    </location>
</feature>
<feature type="coiled-coil region" evidence="3">
    <location>
        <begin position="43"/>
        <end position="114"/>
    </location>
</feature>
<sequence>MAVGLDRADKSNYALRLKEMFNKEIRLQCRETNISKMSSKFHDNLLTAMEKADWQQRELERIERQLVLNRQELEKRLLLEKELTRELEATKLQEATVREHNNELMECIHALKRATGTSINHDALPARVKGVTVLRNTDGDQWIPFDLAVTDTEGLNSLCQKLQSNNIDVNKWRQLVSLATEMSMKWNYSTPNRRDNAKVDIIEIDLTSPTNQIIL</sequence>
<name>SPC25_DROAN</name>
<keyword id="KW-0131">Cell cycle</keyword>
<keyword id="KW-0132">Cell division</keyword>
<keyword id="KW-0137">Centromere</keyword>
<keyword id="KW-0158">Chromosome</keyword>
<keyword id="KW-0175">Coiled coil</keyword>
<keyword id="KW-0995">Kinetochore</keyword>
<keyword id="KW-0469">Meiosis</keyword>
<keyword id="KW-0498">Mitosis</keyword>
<keyword id="KW-0539">Nucleus</keyword>
<keyword id="KW-1185">Reference proteome</keyword>
<evidence type="ECO:0000250" key="1">
    <source>
        <dbReference type="UniProtKB" id="Q9HBM1"/>
    </source>
</evidence>
<evidence type="ECO:0000250" key="2">
    <source>
        <dbReference type="UniProtKB" id="Q9V3V7"/>
    </source>
</evidence>
<evidence type="ECO:0000255" key="3"/>
<evidence type="ECO:0000312" key="4">
    <source>
        <dbReference type="EMBL" id="EDV42640.1"/>
    </source>
</evidence>
<protein>
    <recommendedName>
        <fullName evidence="2">Kinetochore protein Spc25</fullName>
    </recommendedName>
</protein>